<evidence type="ECO:0000255" key="1">
    <source>
        <dbReference type="HAMAP-Rule" id="MF_01113"/>
    </source>
</evidence>
<name>DPO4_ESCFE</name>
<accession>P58963</accession>
<proteinExistence type="inferred from homology"/>
<reference key="1">
    <citation type="submission" date="2002-02" db="EMBL/GenBank/DDBJ databases">
        <title>Phylogeny of SOS inducible DNA polymerases of Escherichia coli.</title>
        <authorList>
            <person name="Bjedov I."/>
            <person name="Matic I."/>
            <person name="Denamur E."/>
        </authorList>
    </citation>
    <scope>NUCLEOTIDE SEQUENCE [GENOMIC DNA]</scope>
</reference>
<organism>
    <name type="scientific">Escherichia fergusonii</name>
    <dbReference type="NCBI Taxonomy" id="564"/>
    <lineage>
        <taxon>Bacteria</taxon>
        <taxon>Pseudomonadati</taxon>
        <taxon>Pseudomonadota</taxon>
        <taxon>Gammaproteobacteria</taxon>
        <taxon>Enterobacterales</taxon>
        <taxon>Enterobacteriaceae</taxon>
        <taxon>Escherichia</taxon>
    </lineage>
</organism>
<dbReference type="EC" id="2.7.7.7" evidence="1"/>
<dbReference type="EMBL" id="AF483106">
    <property type="protein sequence ID" value="AAL91969.1"/>
    <property type="molecule type" value="Genomic_DNA"/>
</dbReference>
<dbReference type="SMR" id="P58963"/>
<dbReference type="GO" id="GO:0005829">
    <property type="term" value="C:cytosol"/>
    <property type="evidence" value="ECO:0007669"/>
    <property type="project" value="TreeGrafter"/>
</dbReference>
<dbReference type="GO" id="GO:0003684">
    <property type="term" value="F:damaged DNA binding"/>
    <property type="evidence" value="ECO:0007669"/>
    <property type="project" value="InterPro"/>
</dbReference>
<dbReference type="GO" id="GO:0003887">
    <property type="term" value="F:DNA-directed DNA polymerase activity"/>
    <property type="evidence" value="ECO:0007669"/>
    <property type="project" value="UniProtKB-KW"/>
</dbReference>
<dbReference type="GO" id="GO:0046872">
    <property type="term" value="F:metal ion binding"/>
    <property type="evidence" value="ECO:0007669"/>
    <property type="project" value="UniProtKB-KW"/>
</dbReference>
<dbReference type="GO" id="GO:0006260">
    <property type="term" value="P:DNA replication"/>
    <property type="evidence" value="ECO:0007669"/>
    <property type="project" value="UniProtKB-KW"/>
</dbReference>
<dbReference type="GO" id="GO:0042276">
    <property type="term" value="P:error-prone translesion synthesis"/>
    <property type="evidence" value="ECO:0007669"/>
    <property type="project" value="TreeGrafter"/>
</dbReference>
<dbReference type="GO" id="GO:0009432">
    <property type="term" value="P:SOS response"/>
    <property type="evidence" value="ECO:0007669"/>
    <property type="project" value="TreeGrafter"/>
</dbReference>
<dbReference type="CDD" id="cd03586">
    <property type="entry name" value="PolY_Pol_IV_kappa"/>
    <property type="match status" value="1"/>
</dbReference>
<dbReference type="FunFam" id="1.10.150.20:FF:000019">
    <property type="entry name" value="DNA polymerase IV"/>
    <property type="match status" value="1"/>
</dbReference>
<dbReference type="FunFam" id="3.30.1490.100:FF:000002">
    <property type="entry name" value="DNA polymerase IV"/>
    <property type="match status" value="1"/>
</dbReference>
<dbReference type="FunFam" id="3.30.70.270:FF:000002">
    <property type="entry name" value="DNA polymerase IV"/>
    <property type="match status" value="1"/>
</dbReference>
<dbReference type="FunFam" id="3.40.1170.60:FF:000001">
    <property type="entry name" value="DNA polymerase IV"/>
    <property type="match status" value="1"/>
</dbReference>
<dbReference type="Gene3D" id="3.30.70.270">
    <property type="match status" value="1"/>
</dbReference>
<dbReference type="Gene3D" id="3.40.1170.60">
    <property type="match status" value="1"/>
</dbReference>
<dbReference type="Gene3D" id="1.10.150.20">
    <property type="entry name" value="5' to 3' exonuclease, C-terminal subdomain"/>
    <property type="match status" value="1"/>
</dbReference>
<dbReference type="Gene3D" id="3.30.1490.100">
    <property type="entry name" value="DNA polymerase, Y-family, little finger domain"/>
    <property type="match status" value="1"/>
</dbReference>
<dbReference type="HAMAP" id="MF_01113">
    <property type="entry name" value="DNApol_IV"/>
    <property type="match status" value="1"/>
</dbReference>
<dbReference type="InterPro" id="IPR043502">
    <property type="entry name" value="DNA/RNA_pol_sf"/>
</dbReference>
<dbReference type="InterPro" id="IPR036775">
    <property type="entry name" value="DNA_pol_Y-fam_lit_finger_sf"/>
</dbReference>
<dbReference type="InterPro" id="IPR017961">
    <property type="entry name" value="DNA_pol_Y-fam_little_finger"/>
</dbReference>
<dbReference type="InterPro" id="IPR050116">
    <property type="entry name" value="DNA_polymerase-Y"/>
</dbReference>
<dbReference type="InterPro" id="IPR022880">
    <property type="entry name" value="DNApol_IV"/>
</dbReference>
<dbReference type="InterPro" id="IPR053848">
    <property type="entry name" value="IMS_HHH_1"/>
</dbReference>
<dbReference type="InterPro" id="IPR043128">
    <property type="entry name" value="Rev_trsase/Diguanyl_cyclase"/>
</dbReference>
<dbReference type="InterPro" id="IPR001126">
    <property type="entry name" value="UmuC"/>
</dbReference>
<dbReference type="NCBIfam" id="NF002677">
    <property type="entry name" value="PRK02406.1"/>
    <property type="match status" value="1"/>
</dbReference>
<dbReference type="PANTHER" id="PTHR11076:SF33">
    <property type="entry name" value="DNA POLYMERASE KAPPA"/>
    <property type="match status" value="1"/>
</dbReference>
<dbReference type="PANTHER" id="PTHR11076">
    <property type="entry name" value="DNA REPAIR POLYMERASE UMUC / TRANSFERASE FAMILY MEMBER"/>
    <property type="match status" value="1"/>
</dbReference>
<dbReference type="Pfam" id="PF00817">
    <property type="entry name" value="IMS"/>
    <property type="match status" value="1"/>
</dbReference>
<dbReference type="Pfam" id="PF11799">
    <property type="entry name" value="IMS_C"/>
    <property type="match status" value="1"/>
</dbReference>
<dbReference type="Pfam" id="PF21999">
    <property type="entry name" value="IMS_HHH_1"/>
    <property type="match status" value="1"/>
</dbReference>
<dbReference type="SUPFAM" id="SSF56672">
    <property type="entry name" value="DNA/RNA polymerases"/>
    <property type="match status" value="1"/>
</dbReference>
<dbReference type="SUPFAM" id="SSF100879">
    <property type="entry name" value="Lesion bypass DNA polymerase (Y-family), little finger domain"/>
    <property type="match status" value="1"/>
</dbReference>
<dbReference type="PROSITE" id="PS50173">
    <property type="entry name" value="UMUC"/>
    <property type="match status" value="1"/>
</dbReference>
<protein>
    <recommendedName>
        <fullName evidence="1">DNA polymerase IV</fullName>
        <shortName evidence="1">Pol IV</shortName>
        <ecNumber evidence="1">2.7.7.7</ecNumber>
    </recommendedName>
</protein>
<feature type="chain" id="PRO_0000173915" description="DNA polymerase IV">
    <location>
        <begin position="1" status="less than"/>
        <end position="331" status="greater than"/>
    </location>
</feature>
<feature type="domain" description="UmuC" evidence="1">
    <location>
        <begin position="1" status="less than"/>
        <end position="174"/>
    </location>
</feature>
<feature type="active site" evidence="1">
    <location>
        <position position="93"/>
    </location>
</feature>
<feature type="binding site" evidence="1">
    <location>
        <position position="92"/>
    </location>
    <ligand>
        <name>Mg(2+)</name>
        <dbReference type="ChEBI" id="CHEBI:18420"/>
    </ligand>
</feature>
<feature type="site" description="Substrate discrimination" evidence="1">
    <location>
        <position position="2"/>
    </location>
</feature>
<feature type="non-terminal residue">
    <location>
        <position position="1"/>
    </location>
</feature>
<feature type="non-terminal residue">
    <location>
        <position position="331"/>
    </location>
</feature>
<keyword id="KW-0963">Cytoplasm</keyword>
<keyword id="KW-0227">DNA damage</keyword>
<keyword id="KW-0234">DNA repair</keyword>
<keyword id="KW-0235">DNA replication</keyword>
<keyword id="KW-0238">DNA-binding</keyword>
<keyword id="KW-0239">DNA-directed DNA polymerase</keyword>
<keyword id="KW-0460">Magnesium</keyword>
<keyword id="KW-0479">Metal-binding</keyword>
<keyword id="KW-0515">Mutator protein</keyword>
<keyword id="KW-0548">Nucleotidyltransferase</keyword>
<keyword id="KW-0808">Transferase</keyword>
<gene>
    <name evidence="1" type="primary">dinB</name>
</gene>
<sequence>FFAAVEMRDNPALRDIPIAIGGSRERRGVISTANYPARKFGVRSAMPTGMALKLCPHLTLLPGRFDAYKEASNHIREIFSRYTSRIEPLSLDEAYLDVTDSVHCHGSATLIAQEIRQTIFNELQLTASAGIAPVKFLAKIASDMNKPNGQFVITPADVPAFLQTLPLAKIPGVGKVSAAKLEAMGLRTCGDVQKCDLVTLLKRFGKFGRILWERSQGIDERDVNSERLRKSVGVERTMAEDIHHWSECEAIIERLYPELERRLAKVKPDLLIARQGVKLKFDDFQQTTQEHVWPRLNKADLIATARKTWDERRGGRGVRLVGLHVTLLDPQ</sequence>
<comment type="function">
    <text evidence="1">Poorly processive, error-prone DNA polymerase involved in untargeted mutagenesis. Copies undamaged DNA at stalled replication forks, which arise in vivo from mismatched or misaligned primer ends. These misaligned primers can be extended by PolIV. Exhibits no 3'-5' exonuclease (proofreading) activity. May be involved in translesional synthesis, in conjunction with the beta clamp from PolIII.</text>
</comment>
<comment type="catalytic activity">
    <reaction evidence="1">
        <text>DNA(n) + a 2'-deoxyribonucleoside 5'-triphosphate = DNA(n+1) + diphosphate</text>
        <dbReference type="Rhea" id="RHEA:22508"/>
        <dbReference type="Rhea" id="RHEA-COMP:17339"/>
        <dbReference type="Rhea" id="RHEA-COMP:17340"/>
        <dbReference type="ChEBI" id="CHEBI:33019"/>
        <dbReference type="ChEBI" id="CHEBI:61560"/>
        <dbReference type="ChEBI" id="CHEBI:173112"/>
        <dbReference type="EC" id="2.7.7.7"/>
    </reaction>
</comment>
<comment type="cofactor">
    <cofactor evidence="1">
        <name>Mg(2+)</name>
        <dbReference type="ChEBI" id="CHEBI:18420"/>
    </cofactor>
    <text evidence="1">Binds 2 magnesium ions per subunit.</text>
</comment>
<comment type="subunit">
    <text evidence="1">Monomer.</text>
</comment>
<comment type="subcellular location">
    <subcellularLocation>
        <location evidence="1">Cytoplasm</location>
    </subcellularLocation>
</comment>
<comment type="similarity">
    <text evidence="1">Belongs to the DNA polymerase type-Y family.</text>
</comment>